<evidence type="ECO:0000255" key="1">
    <source>
        <dbReference type="HAMAP-Rule" id="MF_00097"/>
    </source>
</evidence>
<keyword id="KW-0460">Magnesium</keyword>
<keyword id="KW-0479">Metal-binding</keyword>
<keyword id="KW-0784">Thiamine biosynthesis</keyword>
<keyword id="KW-0808">Transferase</keyword>
<protein>
    <recommendedName>
        <fullName evidence="1">Thiamine-phosphate synthase</fullName>
        <shortName evidence="1">TP synthase</shortName>
        <shortName evidence="1">TPS</shortName>
        <ecNumber evidence="1">2.5.1.3</ecNumber>
    </recommendedName>
    <alternativeName>
        <fullName evidence="1">Thiamine-phosphate pyrophosphorylase</fullName>
        <shortName evidence="1">TMP pyrophosphorylase</shortName>
        <shortName evidence="1">TMP-PPase</shortName>
    </alternativeName>
</protein>
<reference key="1">
    <citation type="journal article" date="2008" name="Chem. Biol. Interact.">
        <title>Extending the Bacillus cereus group genomics to putative food-borne pathogens of different toxicity.</title>
        <authorList>
            <person name="Lapidus A."/>
            <person name="Goltsman E."/>
            <person name="Auger S."/>
            <person name="Galleron N."/>
            <person name="Segurens B."/>
            <person name="Dossat C."/>
            <person name="Land M.L."/>
            <person name="Broussolle V."/>
            <person name="Brillard J."/>
            <person name="Guinebretiere M.-H."/>
            <person name="Sanchis V."/>
            <person name="Nguen-the C."/>
            <person name="Lereclus D."/>
            <person name="Richardson P."/>
            <person name="Wincker P."/>
            <person name="Weissenbach J."/>
            <person name="Ehrlich S.D."/>
            <person name="Sorokin A."/>
        </authorList>
    </citation>
    <scope>NUCLEOTIDE SEQUENCE [LARGE SCALE GENOMIC DNA]</scope>
    <source>
        <strain>KBAB4</strain>
    </source>
</reference>
<proteinExistence type="inferred from homology"/>
<dbReference type="EC" id="2.5.1.3" evidence="1"/>
<dbReference type="EMBL" id="CP000903">
    <property type="protein sequence ID" value="ABY41624.1"/>
    <property type="molecule type" value="Genomic_DNA"/>
</dbReference>
<dbReference type="RefSeq" id="WP_002139484.1">
    <property type="nucleotide sequence ID" value="NC_010184.1"/>
</dbReference>
<dbReference type="SMR" id="A9VRN4"/>
<dbReference type="KEGG" id="bwe:BcerKBAB4_0358"/>
<dbReference type="eggNOG" id="COG0352">
    <property type="taxonomic scope" value="Bacteria"/>
</dbReference>
<dbReference type="HOGENOM" id="CLU_018272_3_2_9"/>
<dbReference type="UniPathway" id="UPA00060">
    <property type="reaction ID" value="UER00141"/>
</dbReference>
<dbReference type="Proteomes" id="UP000002154">
    <property type="component" value="Chromosome"/>
</dbReference>
<dbReference type="GO" id="GO:0005737">
    <property type="term" value="C:cytoplasm"/>
    <property type="evidence" value="ECO:0007669"/>
    <property type="project" value="TreeGrafter"/>
</dbReference>
<dbReference type="GO" id="GO:0000287">
    <property type="term" value="F:magnesium ion binding"/>
    <property type="evidence" value="ECO:0007669"/>
    <property type="project" value="UniProtKB-UniRule"/>
</dbReference>
<dbReference type="GO" id="GO:0004789">
    <property type="term" value="F:thiamine-phosphate diphosphorylase activity"/>
    <property type="evidence" value="ECO:0007669"/>
    <property type="project" value="UniProtKB-UniRule"/>
</dbReference>
<dbReference type="GO" id="GO:0009228">
    <property type="term" value="P:thiamine biosynthetic process"/>
    <property type="evidence" value="ECO:0007669"/>
    <property type="project" value="UniProtKB-KW"/>
</dbReference>
<dbReference type="GO" id="GO:0009229">
    <property type="term" value="P:thiamine diphosphate biosynthetic process"/>
    <property type="evidence" value="ECO:0007669"/>
    <property type="project" value="UniProtKB-UniRule"/>
</dbReference>
<dbReference type="CDD" id="cd00564">
    <property type="entry name" value="TMP_TenI"/>
    <property type="match status" value="1"/>
</dbReference>
<dbReference type="FunFam" id="3.20.20.70:FF:000096">
    <property type="entry name" value="Thiamine-phosphate synthase"/>
    <property type="match status" value="1"/>
</dbReference>
<dbReference type="Gene3D" id="3.20.20.70">
    <property type="entry name" value="Aldolase class I"/>
    <property type="match status" value="1"/>
</dbReference>
<dbReference type="HAMAP" id="MF_00097">
    <property type="entry name" value="TMP_synthase"/>
    <property type="match status" value="1"/>
</dbReference>
<dbReference type="InterPro" id="IPR013785">
    <property type="entry name" value="Aldolase_TIM"/>
</dbReference>
<dbReference type="InterPro" id="IPR036206">
    <property type="entry name" value="ThiamineP_synth_sf"/>
</dbReference>
<dbReference type="InterPro" id="IPR022998">
    <property type="entry name" value="ThiamineP_synth_TenI"/>
</dbReference>
<dbReference type="InterPro" id="IPR034291">
    <property type="entry name" value="TMP_synthase"/>
</dbReference>
<dbReference type="NCBIfam" id="TIGR00693">
    <property type="entry name" value="thiE"/>
    <property type="match status" value="1"/>
</dbReference>
<dbReference type="PANTHER" id="PTHR20857">
    <property type="entry name" value="THIAMINE-PHOSPHATE PYROPHOSPHORYLASE"/>
    <property type="match status" value="1"/>
</dbReference>
<dbReference type="PANTHER" id="PTHR20857:SF15">
    <property type="entry name" value="THIAMINE-PHOSPHATE SYNTHASE"/>
    <property type="match status" value="1"/>
</dbReference>
<dbReference type="Pfam" id="PF02581">
    <property type="entry name" value="TMP-TENI"/>
    <property type="match status" value="1"/>
</dbReference>
<dbReference type="SUPFAM" id="SSF51391">
    <property type="entry name" value="Thiamin phosphate synthase"/>
    <property type="match status" value="1"/>
</dbReference>
<name>THIE_BACMK</name>
<sequence>MPRITKAEMSRLLPVYFIMGSNNCTKEPLQVLRDALEGGITIFQLREKGEGALTGEKRIDFAKELQALCKEYGVPFIVNDDVELALELDADGVHVGQDDEGITSVREKMGDKIIGVSAHTIEEARFAIENGADYLGVGPIFPTSTKKDTKAVQGTKGLAHFREQGITMPIVGIGGITIENTAAVIEAGADGVSVISAISLAESAYESTRKLAEEVNKSL</sequence>
<accession>A9VRN4</accession>
<organism>
    <name type="scientific">Bacillus mycoides (strain KBAB4)</name>
    <name type="common">Bacillus weihenstephanensis</name>
    <dbReference type="NCBI Taxonomy" id="315730"/>
    <lineage>
        <taxon>Bacteria</taxon>
        <taxon>Bacillati</taxon>
        <taxon>Bacillota</taxon>
        <taxon>Bacilli</taxon>
        <taxon>Bacillales</taxon>
        <taxon>Bacillaceae</taxon>
        <taxon>Bacillus</taxon>
        <taxon>Bacillus cereus group</taxon>
    </lineage>
</organism>
<comment type="function">
    <text evidence="1">Condenses 4-methyl-5-(beta-hydroxyethyl)thiazole monophosphate (THZ-P) and 2-methyl-4-amino-5-hydroxymethyl pyrimidine pyrophosphate (HMP-PP) to form thiamine monophosphate (TMP).</text>
</comment>
<comment type="catalytic activity">
    <reaction evidence="1">
        <text>2-[(2R,5Z)-2-carboxy-4-methylthiazol-5(2H)-ylidene]ethyl phosphate + 4-amino-2-methyl-5-(diphosphooxymethyl)pyrimidine + 2 H(+) = thiamine phosphate + CO2 + diphosphate</text>
        <dbReference type="Rhea" id="RHEA:47844"/>
        <dbReference type="ChEBI" id="CHEBI:15378"/>
        <dbReference type="ChEBI" id="CHEBI:16526"/>
        <dbReference type="ChEBI" id="CHEBI:33019"/>
        <dbReference type="ChEBI" id="CHEBI:37575"/>
        <dbReference type="ChEBI" id="CHEBI:57841"/>
        <dbReference type="ChEBI" id="CHEBI:62899"/>
        <dbReference type="EC" id="2.5.1.3"/>
    </reaction>
</comment>
<comment type="catalytic activity">
    <reaction evidence="1">
        <text>2-(2-carboxy-4-methylthiazol-5-yl)ethyl phosphate + 4-amino-2-methyl-5-(diphosphooxymethyl)pyrimidine + 2 H(+) = thiamine phosphate + CO2 + diphosphate</text>
        <dbReference type="Rhea" id="RHEA:47848"/>
        <dbReference type="ChEBI" id="CHEBI:15378"/>
        <dbReference type="ChEBI" id="CHEBI:16526"/>
        <dbReference type="ChEBI" id="CHEBI:33019"/>
        <dbReference type="ChEBI" id="CHEBI:37575"/>
        <dbReference type="ChEBI" id="CHEBI:57841"/>
        <dbReference type="ChEBI" id="CHEBI:62890"/>
        <dbReference type="EC" id="2.5.1.3"/>
    </reaction>
</comment>
<comment type="catalytic activity">
    <reaction evidence="1">
        <text>4-methyl-5-(2-phosphooxyethyl)-thiazole + 4-amino-2-methyl-5-(diphosphooxymethyl)pyrimidine + H(+) = thiamine phosphate + diphosphate</text>
        <dbReference type="Rhea" id="RHEA:22328"/>
        <dbReference type="ChEBI" id="CHEBI:15378"/>
        <dbReference type="ChEBI" id="CHEBI:33019"/>
        <dbReference type="ChEBI" id="CHEBI:37575"/>
        <dbReference type="ChEBI" id="CHEBI:57841"/>
        <dbReference type="ChEBI" id="CHEBI:58296"/>
        <dbReference type="EC" id="2.5.1.3"/>
    </reaction>
</comment>
<comment type="cofactor">
    <cofactor evidence="1">
        <name>Mg(2+)</name>
        <dbReference type="ChEBI" id="CHEBI:18420"/>
    </cofactor>
    <text evidence="1">Binds 1 Mg(2+) ion per subunit.</text>
</comment>
<comment type="pathway">
    <text evidence="1">Cofactor biosynthesis; thiamine diphosphate biosynthesis; thiamine phosphate from 4-amino-2-methyl-5-diphosphomethylpyrimidine and 4-methyl-5-(2-phosphoethyl)-thiazole: step 1/1.</text>
</comment>
<comment type="similarity">
    <text evidence="1">Belongs to the thiamine-phosphate synthase family.</text>
</comment>
<gene>
    <name evidence="1" type="primary">thiE</name>
    <name type="ordered locus">BcerKBAB4_0358</name>
</gene>
<feature type="chain" id="PRO_1000093660" description="Thiamine-phosphate synthase">
    <location>
        <begin position="1"/>
        <end position="219"/>
    </location>
</feature>
<feature type="binding site" evidence="1">
    <location>
        <begin position="44"/>
        <end position="48"/>
    </location>
    <ligand>
        <name>4-amino-2-methyl-5-(diphosphooxymethyl)pyrimidine</name>
        <dbReference type="ChEBI" id="CHEBI:57841"/>
    </ligand>
</feature>
<feature type="binding site" evidence="1">
    <location>
        <position position="79"/>
    </location>
    <ligand>
        <name>4-amino-2-methyl-5-(diphosphooxymethyl)pyrimidine</name>
        <dbReference type="ChEBI" id="CHEBI:57841"/>
    </ligand>
</feature>
<feature type="binding site" evidence="1">
    <location>
        <position position="80"/>
    </location>
    <ligand>
        <name>Mg(2+)</name>
        <dbReference type="ChEBI" id="CHEBI:18420"/>
    </ligand>
</feature>
<feature type="binding site" evidence="1">
    <location>
        <position position="99"/>
    </location>
    <ligand>
        <name>Mg(2+)</name>
        <dbReference type="ChEBI" id="CHEBI:18420"/>
    </ligand>
</feature>
<feature type="binding site" evidence="1">
    <location>
        <position position="117"/>
    </location>
    <ligand>
        <name>4-amino-2-methyl-5-(diphosphooxymethyl)pyrimidine</name>
        <dbReference type="ChEBI" id="CHEBI:57841"/>
    </ligand>
</feature>
<feature type="binding site" evidence="1">
    <location>
        <begin position="143"/>
        <end position="145"/>
    </location>
    <ligand>
        <name>2-[(2R,5Z)-2-carboxy-4-methylthiazol-5(2H)-ylidene]ethyl phosphate</name>
        <dbReference type="ChEBI" id="CHEBI:62899"/>
    </ligand>
</feature>
<feature type="binding site" evidence="1">
    <location>
        <position position="146"/>
    </location>
    <ligand>
        <name>4-amino-2-methyl-5-(diphosphooxymethyl)pyrimidine</name>
        <dbReference type="ChEBI" id="CHEBI:57841"/>
    </ligand>
</feature>
<feature type="binding site" evidence="1">
    <location>
        <position position="175"/>
    </location>
    <ligand>
        <name>2-[(2R,5Z)-2-carboxy-4-methylthiazol-5(2H)-ylidene]ethyl phosphate</name>
        <dbReference type="ChEBI" id="CHEBI:62899"/>
    </ligand>
</feature>
<feature type="binding site" evidence="1">
    <location>
        <begin position="195"/>
        <end position="196"/>
    </location>
    <ligand>
        <name>2-[(2R,5Z)-2-carboxy-4-methylthiazol-5(2H)-ylidene]ethyl phosphate</name>
        <dbReference type="ChEBI" id="CHEBI:62899"/>
    </ligand>
</feature>